<evidence type="ECO:0000250" key="1"/>
<evidence type="ECO:0000255" key="2"/>
<evidence type="ECO:0000255" key="3">
    <source>
        <dbReference type="PROSITE-ProRule" id="PRU00279"/>
    </source>
</evidence>
<evidence type="ECO:0000305" key="4"/>
<evidence type="ECO:0000312" key="5">
    <source>
        <dbReference type="EMBL" id="EEE62055.1"/>
    </source>
</evidence>
<keyword id="KW-0249">Electron transport</keyword>
<keyword id="KW-0256">Endoplasmic reticulum</keyword>
<keyword id="KW-0349">Heme</keyword>
<keyword id="KW-0408">Iron</keyword>
<keyword id="KW-0472">Membrane</keyword>
<keyword id="KW-0479">Metal-binding</keyword>
<keyword id="KW-0492">Microsome</keyword>
<keyword id="KW-1185">Reference proteome</keyword>
<keyword id="KW-0812">Transmembrane</keyword>
<keyword id="KW-1133">Transmembrane helix</keyword>
<keyword id="KW-0813">Transport</keyword>
<organism>
    <name type="scientific">Oryza sativa subsp. japonica</name>
    <name type="common">Rice</name>
    <dbReference type="NCBI Taxonomy" id="39947"/>
    <lineage>
        <taxon>Eukaryota</taxon>
        <taxon>Viridiplantae</taxon>
        <taxon>Streptophyta</taxon>
        <taxon>Embryophyta</taxon>
        <taxon>Tracheophyta</taxon>
        <taxon>Spermatophyta</taxon>
        <taxon>Magnoliopsida</taxon>
        <taxon>Liliopsida</taxon>
        <taxon>Poales</taxon>
        <taxon>Poaceae</taxon>
        <taxon>BOP clade</taxon>
        <taxon>Oryzoideae</taxon>
        <taxon>Oryzeae</taxon>
        <taxon>Oryzinae</taxon>
        <taxon>Oryza</taxon>
        <taxon>Oryza sativa</taxon>
    </lineage>
</organism>
<gene>
    <name type="ordered locus">Os05g0108800</name>
    <name type="ordered locus">LOC_Os05g01820</name>
    <name evidence="5" type="ORF">OsJ_16839</name>
    <name type="ORF">OSJNBa0068N01.16</name>
</gene>
<comment type="function">
    <text evidence="1">Membrane bound hemoprotein which function as an electron carrier for several membrane bound oxygenases.</text>
</comment>
<comment type="subcellular location">
    <subcellularLocation>
        <location evidence="1">Endoplasmic reticulum membrane</location>
        <topology evidence="1">Single-pass membrane protein</topology>
        <orientation evidence="1">Cytoplasmic side</orientation>
    </subcellularLocation>
    <subcellularLocation>
        <location evidence="1">Microsome membrane</location>
        <topology evidence="1">Single-pass membrane protein</topology>
        <orientation evidence="1">Cytoplasmic side</orientation>
    </subcellularLocation>
</comment>
<comment type="similarity">
    <text evidence="4">Belongs to the cytochrome b5 family.</text>
</comment>
<feature type="chain" id="PRO_0000166027" description="Cytochrome b5">
    <location>
        <begin position="1"/>
        <end position="137"/>
    </location>
</feature>
<feature type="transmembrane region" description="Helical" evidence="2">
    <location>
        <begin position="108"/>
        <end position="128"/>
    </location>
</feature>
<feature type="domain" description="Cytochrome b5 heme-binding" evidence="3">
    <location>
        <begin position="6"/>
        <end position="82"/>
    </location>
</feature>
<feature type="binding site" description="axial binding residue" evidence="3">
    <location>
        <position position="41"/>
    </location>
    <ligand>
        <name>heme</name>
        <dbReference type="ChEBI" id="CHEBI:30413"/>
    </ligand>
    <ligandPart>
        <name>Fe</name>
        <dbReference type="ChEBI" id="CHEBI:18248"/>
    </ligandPart>
</feature>
<feature type="binding site" description="axial binding residue" evidence="3">
    <location>
        <position position="65"/>
    </location>
    <ligand>
        <name>heme</name>
        <dbReference type="ChEBI" id="CHEBI:30413"/>
    </ligand>
    <ligandPart>
        <name>Fe</name>
        <dbReference type="ChEBI" id="CHEBI:18248"/>
    </ligandPart>
</feature>
<feature type="sequence conflict" description="In Ref. 1; CAA53366." evidence="4" ref="1">
    <original>S</original>
    <variation>T</variation>
    <location>
        <position position="66"/>
    </location>
</feature>
<sequence length="137" mass="15282">MSNDNKKVYTLEEVAKHNSKDDCWLIIGGKVYNVSKFLEDHPGGDDVLLSSTGKDATDDFEDVGHSTTARAMMDEYYVGDIDTSTIPARTKYVPPKQPHYNQDKTPEFIIKILQFLVPLAILGLAVAIRIYTKSESA</sequence>
<accession>P49100</accession>
<accession>Q0DLC5</accession>
<accession>Q65X19</accession>
<accession>Q94HK6</accession>
<reference key="1">
    <citation type="journal article" date="1994" name="Plant Mol. Biol.">
        <title>Tobacco cytochrome b5: cDNA isolation, expression analysis and in vitro protein targeting.</title>
        <authorList>
            <person name="Smith M.A."/>
            <person name="Stobart A.K."/>
            <person name="Shewry P.R."/>
            <person name="Napier J.A."/>
        </authorList>
    </citation>
    <scope>NUCLEOTIDE SEQUENCE [MRNA]</scope>
    <source>
        <tissue>Callus</tissue>
    </source>
</reference>
<reference key="2">
    <citation type="journal article" date="2005" name="Mol. Genet. Genomics">
        <title>A fine physical map of the rice chromosome 5.</title>
        <authorList>
            <person name="Cheng C.-H."/>
            <person name="Chung M.C."/>
            <person name="Liu S.-M."/>
            <person name="Chen S.-K."/>
            <person name="Kao F.Y."/>
            <person name="Lin S.-J."/>
            <person name="Hsiao S.-H."/>
            <person name="Tseng I.C."/>
            <person name="Hsing Y.-I.C."/>
            <person name="Wu H.-P."/>
            <person name="Chen C.-S."/>
            <person name="Shaw J.-F."/>
            <person name="Wu J."/>
            <person name="Matsumoto T."/>
            <person name="Sasaki T."/>
            <person name="Chen H.-C."/>
            <person name="Chow T.-Y."/>
        </authorList>
    </citation>
    <scope>NUCLEOTIDE SEQUENCE [LARGE SCALE GENOMIC DNA]</scope>
    <source>
        <strain>cv. Nipponbare</strain>
    </source>
</reference>
<reference key="3">
    <citation type="journal article" date="2005" name="Nature">
        <title>The map-based sequence of the rice genome.</title>
        <authorList>
            <consortium name="International rice genome sequencing project (IRGSP)"/>
        </authorList>
    </citation>
    <scope>NUCLEOTIDE SEQUENCE [LARGE SCALE GENOMIC DNA]</scope>
    <source>
        <strain>cv. Nipponbare</strain>
    </source>
</reference>
<reference key="4">
    <citation type="journal article" date="2008" name="Nucleic Acids Res.">
        <title>The rice annotation project database (RAP-DB): 2008 update.</title>
        <authorList>
            <consortium name="The rice annotation project (RAP)"/>
        </authorList>
    </citation>
    <scope>GENOME REANNOTATION</scope>
    <source>
        <strain>cv. Nipponbare</strain>
    </source>
</reference>
<reference key="5">
    <citation type="journal article" date="2013" name="Rice">
        <title>Improvement of the Oryza sativa Nipponbare reference genome using next generation sequence and optical map data.</title>
        <authorList>
            <person name="Kawahara Y."/>
            <person name="de la Bastide M."/>
            <person name="Hamilton J.P."/>
            <person name="Kanamori H."/>
            <person name="McCombie W.R."/>
            <person name="Ouyang S."/>
            <person name="Schwartz D.C."/>
            <person name="Tanaka T."/>
            <person name="Wu J."/>
            <person name="Zhou S."/>
            <person name="Childs K.L."/>
            <person name="Davidson R.M."/>
            <person name="Lin H."/>
            <person name="Quesada-Ocampo L."/>
            <person name="Vaillancourt B."/>
            <person name="Sakai H."/>
            <person name="Lee S.S."/>
            <person name="Kim J."/>
            <person name="Numa H."/>
            <person name="Itoh T."/>
            <person name="Buell C.R."/>
            <person name="Matsumoto T."/>
        </authorList>
    </citation>
    <scope>GENOME REANNOTATION</scope>
    <source>
        <strain>cv. Nipponbare</strain>
    </source>
</reference>
<reference key="6">
    <citation type="journal article" date="2005" name="PLoS Biol.">
        <title>The genomes of Oryza sativa: a history of duplications.</title>
        <authorList>
            <person name="Yu J."/>
            <person name="Wang J."/>
            <person name="Lin W."/>
            <person name="Li S."/>
            <person name="Li H."/>
            <person name="Zhou J."/>
            <person name="Ni P."/>
            <person name="Dong W."/>
            <person name="Hu S."/>
            <person name="Zeng C."/>
            <person name="Zhang J."/>
            <person name="Zhang Y."/>
            <person name="Li R."/>
            <person name="Xu Z."/>
            <person name="Li S."/>
            <person name="Li X."/>
            <person name="Zheng H."/>
            <person name="Cong L."/>
            <person name="Lin L."/>
            <person name="Yin J."/>
            <person name="Geng J."/>
            <person name="Li G."/>
            <person name="Shi J."/>
            <person name="Liu J."/>
            <person name="Lv H."/>
            <person name="Li J."/>
            <person name="Wang J."/>
            <person name="Deng Y."/>
            <person name="Ran L."/>
            <person name="Shi X."/>
            <person name="Wang X."/>
            <person name="Wu Q."/>
            <person name="Li C."/>
            <person name="Ren X."/>
            <person name="Wang J."/>
            <person name="Wang X."/>
            <person name="Li D."/>
            <person name="Liu D."/>
            <person name="Zhang X."/>
            <person name="Ji Z."/>
            <person name="Zhao W."/>
            <person name="Sun Y."/>
            <person name="Zhang Z."/>
            <person name="Bao J."/>
            <person name="Han Y."/>
            <person name="Dong L."/>
            <person name="Ji J."/>
            <person name="Chen P."/>
            <person name="Wu S."/>
            <person name="Liu J."/>
            <person name="Xiao Y."/>
            <person name="Bu D."/>
            <person name="Tan J."/>
            <person name="Yang L."/>
            <person name="Ye C."/>
            <person name="Zhang J."/>
            <person name="Xu J."/>
            <person name="Zhou Y."/>
            <person name="Yu Y."/>
            <person name="Zhang B."/>
            <person name="Zhuang S."/>
            <person name="Wei H."/>
            <person name="Liu B."/>
            <person name="Lei M."/>
            <person name="Yu H."/>
            <person name="Li Y."/>
            <person name="Xu H."/>
            <person name="Wei S."/>
            <person name="He X."/>
            <person name="Fang L."/>
            <person name="Zhang Z."/>
            <person name="Zhang Y."/>
            <person name="Huang X."/>
            <person name="Su Z."/>
            <person name="Tong W."/>
            <person name="Li J."/>
            <person name="Tong Z."/>
            <person name="Li S."/>
            <person name="Ye J."/>
            <person name="Wang L."/>
            <person name="Fang L."/>
            <person name="Lei T."/>
            <person name="Chen C.-S."/>
            <person name="Chen H.-C."/>
            <person name="Xu Z."/>
            <person name="Li H."/>
            <person name="Huang H."/>
            <person name="Zhang F."/>
            <person name="Xu H."/>
            <person name="Li N."/>
            <person name="Zhao C."/>
            <person name="Li S."/>
            <person name="Dong L."/>
            <person name="Huang Y."/>
            <person name="Li L."/>
            <person name="Xi Y."/>
            <person name="Qi Q."/>
            <person name="Li W."/>
            <person name="Zhang B."/>
            <person name="Hu W."/>
            <person name="Zhang Y."/>
            <person name="Tian X."/>
            <person name="Jiao Y."/>
            <person name="Liang X."/>
            <person name="Jin J."/>
            <person name="Gao L."/>
            <person name="Zheng W."/>
            <person name="Hao B."/>
            <person name="Liu S.-M."/>
            <person name="Wang W."/>
            <person name="Yuan L."/>
            <person name="Cao M."/>
            <person name="McDermott J."/>
            <person name="Samudrala R."/>
            <person name="Wang J."/>
            <person name="Wong G.K.-S."/>
            <person name="Yang H."/>
        </authorList>
    </citation>
    <scope>NUCLEOTIDE SEQUENCE [LARGE SCALE GENOMIC DNA]</scope>
    <source>
        <strain>cv. Nipponbare</strain>
    </source>
</reference>
<reference key="7">
    <citation type="journal article" date="2003" name="Science">
        <title>Collection, mapping, and annotation of over 28,000 cDNA clones from japonica rice.</title>
        <authorList>
            <consortium name="The rice full-length cDNA consortium"/>
        </authorList>
    </citation>
    <scope>NUCLEOTIDE SEQUENCE [LARGE SCALE MRNA]</scope>
    <source>
        <strain>cv. Nipponbare</strain>
    </source>
</reference>
<proteinExistence type="evidence at transcript level"/>
<protein>
    <recommendedName>
        <fullName>Cytochrome b5</fullName>
    </recommendedName>
</protein>
<dbReference type="EMBL" id="X75670">
    <property type="protein sequence ID" value="CAA53366.1"/>
    <property type="molecule type" value="mRNA"/>
</dbReference>
<dbReference type="EMBL" id="AC079022">
    <property type="protein sequence ID" value="AAK73138.1"/>
    <property type="molecule type" value="Genomic_DNA"/>
</dbReference>
<dbReference type="EMBL" id="AC129716">
    <property type="protein sequence ID" value="AAU44139.1"/>
    <property type="molecule type" value="Genomic_DNA"/>
</dbReference>
<dbReference type="EMBL" id="AP008211">
    <property type="protein sequence ID" value="BAF16348.1"/>
    <property type="molecule type" value="Genomic_DNA"/>
</dbReference>
<dbReference type="EMBL" id="AP014961">
    <property type="protein sequence ID" value="BAS91901.1"/>
    <property type="molecule type" value="Genomic_DNA"/>
</dbReference>
<dbReference type="EMBL" id="CM000142">
    <property type="protein sequence ID" value="EEE62055.1"/>
    <property type="molecule type" value="Genomic_DNA"/>
</dbReference>
<dbReference type="EMBL" id="AK064821">
    <property type="protein sequence ID" value="BAG89223.1"/>
    <property type="molecule type" value="mRNA"/>
</dbReference>
<dbReference type="PIR" id="S46307">
    <property type="entry name" value="S46307"/>
</dbReference>
<dbReference type="RefSeq" id="XP_015640330.1">
    <property type="nucleotide sequence ID" value="XM_015784844.1"/>
</dbReference>
<dbReference type="SMR" id="P49100"/>
<dbReference type="FunCoup" id="P49100">
    <property type="interactions" value="3046"/>
</dbReference>
<dbReference type="STRING" id="39947.P49100"/>
<dbReference type="PaxDb" id="39947-P49100"/>
<dbReference type="EnsemblPlants" id="Os05t0108800-01">
    <property type="protein sequence ID" value="Os05t0108800-01"/>
    <property type="gene ID" value="Os05g0108800"/>
</dbReference>
<dbReference type="Gramene" id="Os05t0108800-01">
    <property type="protein sequence ID" value="Os05t0108800-01"/>
    <property type="gene ID" value="Os05g0108800"/>
</dbReference>
<dbReference type="KEGG" id="dosa:Os05g0108800"/>
<dbReference type="eggNOG" id="KOG0537">
    <property type="taxonomic scope" value="Eukaryota"/>
</dbReference>
<dbReference type="HOGENOM" id="CLU_102602_3_0_1"/>
<dbReference type="InParanoid" id="P49100"/>
<dbReference type="OMA" id="HNTRNDL"/>
<dbReference type="OrthoDB" id="260519at2759"/>
<dbReference type="Proteomes" id="UP000000763">
    <property type="component" value="Chromosome 5"/>
</dbReference>
<dbReference type="Proteomes" id="UP000007752">
    <property type="component" value="Chromosome 5"/>
</dbReference>
<dbReference type="Proteomes" id="UP000059680">
    <property type="component" value="Chromosome 5"/>
</dbReference>
<dbReference type="ExpressionAtlas" id="P49100">
    <property type="expression patterns" value="baseline and differential"/>
</dbReference>
<dbReference type="GO" id="GO:0005789">
    <property type="term" value="C:endoplasmic reticulum membrane"/>
    <property type="evidence" value="ECO:0007669"/>
    <property type="project" value="UniProtKB-SubCell"/>
</dbReference>
<dbReference type="GO" id="GO:0043231">
    <property type="term" value="C:intracellular membrane-bounded organelle"/>
    <property type="evidence" value="ECO:0000318"/>
    <property type="project" value="GO_Central"/>
</dbReference>
<dbReference type="GO" id="GO:0016020">
    <property type="term" value="C:membrane"/>
    <property type="evidence" value="ECO:0000318"/>
    <property type="project" value="GO_Central"/>
</dbReference>
<dbReference type="GO" id="GO:0020037">
    <property type="term" value="F:heme binding"/>
    <property type="evidence" value="ECO:0000318"/>
    <property type="project" value="GO_Central"/>
</dbReference>
<dbReference type="GO" id="GO:0046872">
    <property type="term" value="F:metal ion binding"/>
    <property type="evidence" value="ECO:0007669"/>
    <property type="project" value="UniProtKB-KW"/>
</dbReference>
<dbReference type="FunFam" id="3.10.120.10:FF:000002">
    <property type="entry name" value="Cytochrome b5 type B"/>
    <property type="match status" value="1"/>
</dbReference>
<dbReference type="Gene3D" id="3.10.120.10">
    <property type="entry name" value="Cytochrome b5-like heme/steroid binding domain"/>
    <property type="match status" value="1"/>
</dbReference>
<dbReference type="InterPro" id="IPR001199">
    <property type="entry name" value="Cyt_B5-like_heme/steroid-bd"/>
</dbReference>
<dbReference type="InterPro" id="IPR036400">
    <property type="entry name" value="Cyt_B5-like_heme/steroid_sf"/>
</dbReference>
<dbReference type="InterPro" id="IPR018506">
    <property type="entry name" value="Cyt_B5_heme-BS"/>
</dbReference>
<dbReference type="InterPro" id="IPR050668">
    <property type="entry name" value="Cytochrome_b5"/>
</dbReference>
<dbReference type="PANTHER" id="PTHR19359">
    <property type="entry name" value="CYTOCHROME B5"/>
    <property type="match status" value="1"/>
</dbReference>
<dbReference type="PANTHER" id="PTHR19359:SF129">
    <property type="entry name" value="CYTOCHROME B5 ISOFORM B"/>
    <property type="match status" value="1"/>
</dbReference>
<dbReference type="Pfam" id="PF00173">
    <property type="entry name" value="Cyt-b5"/>
    <property type="match status" value="1"/>
</dbReference>
<dbReference type="PRINTS" id="PR00363">
    <property type="entry name" value="CYTOCHROMEB5"/>
</dbReference>
<dbReference type="SMART" id="SM01117">
    <property type="entry name" value="Cyt-b5"/>
    <property type="match status" value="1"/>
</dbReference>
<dbReference type="SUPFAM" id="SSF55856">
    <property type="entry name" value="Cytochrome b5-like heme/steroid binding domain"/>
    <property type="match status" value="1"/>
</dbReference>
<dbReference type="PROSITE" id="PS00191">
    <property type="entry name" value="CYTOCHROME_B5_1"/>
    <property type="match status" value="1"/>
</dbReference>
<dbReference type="PROSITE" id="PS50255">
    <property type="entry name" value="CYTOCHROME_B5_2"/>
    <property type="match status" value="1"/>
</dbReference>
<name>CYB5_ORYSJ</name>